<dbReference type="EC" id="4.3.2.10" evidence="1"/>
<dbReference type="EMBL" id="CP000518">
    <property type="protein sequence ID" value="ABL92310.1"/>
    <property type="molecule type" value="Genomic_DNA"/>
</dbReference>
<dbReference type="SMR" id="A1UHK2"/>
<dbReference type="STRING" id="189918.Mkms_3116"/>
<dbReference type="KEGG" id="mkm:Mkms_3116"/>
<dbReference type="HOGENOM" id="CLU_048577_4_0_11"/>
<dbReference type="OrthoDB" id="9781903at2"/>
<dbReference type="UniPathway" id="UPA00031">
    <property type="reaction ID" value="UER00010"/>
</dbReference>
<dbReference type="GO" id="GO:0005737">
    <property type="term" value="C:cytoplasm"/>
    <property type="evidence" value="ECO:0007669"/>
    <property type="project" value="UniProtKB-SubCell"/>
</dbReference>
<dbReference type="GO" id="GO:0000107">
    <property type="term" value="F:imidazoleglycerol-phosphate synthase activity"/>
    <property type="evidence" value="ECO:0007669"/>
    <property type="project" value="UniProtKB-UniRule"/>
</dbReference>
<dbReference type="GO" id="GO:0016829">
    <property type="term" value="F:lyase activity"/>
    <property type="evidence" value="ECO:0007669"/>
    <property type="project" value="UniProtKB-KW"/>
</dbReference>
<dbReference type="GO" id="GO:0000105">
    <property type="term" value="P:L-histidine biosynthetic process"/>
    <property type="evidence" value="ECO:0007669"/>
    <property type="project" value="UniProtKB-UniRule"/>
</dbReference>
<dbReference type="CDD" id="cd04731">
    <property type="entry name" value="HisF"/>
    <property type="match status" value="1"/>
</dbReference>
<dbReference type="FunFam" id="3.20.20.70:FF:000006">
    <property type="entry name" value="Imidazole glycerol phosphate synthase subunit HisF"/>
    <property type="match status" value="1"/>
</dbReference>
<dbReference type="Gene3D" id="3.20.20.70">
    <property type="entry name" value="Aldolase class I"/>
    <property type="match status" value="1"/>
</dbReference>
<dbReference type="HAMAP" id="MF_01013">
    <property type="entry name" value="HisF"/>
    <property type="match status" value="1"/>
</dbReference>
<dbReference type="InterPro" id="IPR013785">
    <property type="entry name" value="Aldolase_TIM"/>
</dbReference>
<dbReference type="InterPro" id="IPR006062">
    <property type="entry name" value="His_biosynth"/>
</dbReference>
<dbReference type="InterPro" id="IPR004651">
    <property type="entry name" value="HisF"/>
</dbReference>
<dbReference type="InterPro" id="IPR050064">
    <property type="entry name" value="IGPS_HisA/HisF"/>
</dbReference>
<dbReference type="InterPro" id="IPR011060">
    <property type="entry name" value="RibuloseP-bd_barrel"/>
</dbReference>
<dbReference type="NCBIfam" id="TIGR00735">
    <property type="entry name" value="hisF"/>
    <property type="match status" value="1"/>
</dbReference>
<dbReference type="PANTHER" id="PTHR21235:SF2">
    <property type="entry name" value="IMIDAZOLE GLYCEROL PHOSPHATE SYNTHASE HISHF"/>
    <property type="match status" value="1"/>
</dbReference>
<dbReference type="PANTHER" id="PTHR21235">
    <property type="entry name" value="IMIDAZOLE GLYCEROL PHOSPHATE SYNTHASE SUBUNIT HISF/H IGP SYNTHASE SUBUNIT HISF/H"/>
    <property type="match status" value="1"/>
</dbReference>
<dbReference type="Pfam" id="PF00977">
    <property type="entry name" value="His_biosynth"/>
    <property type="match status" value="1"/>
</dbReference>
<dbReference type="SUPFAM" id="SSF51366">
    <property type="entry name" value="Ribulose-phoshate binding barrel"/>
    <property type="match status" value="1"/>
</dbReference>
<accession>A1UHK2</accession>
<reference key="1">
    <citation type="submission" date="2006-12" db="EMBL/GenBank/DDBJ databases">
        <title>Complete sequence of chromosome of Mycobacterium sp. KMS.</title>
        <authorList>
            <consortium name="US DOE Joint Genome Institute"/>
            <person name="Copeland A."/>
            <person name="Lucas S."/>
            <person name="Lapidus A."/>
            <person name="Barry K."/>
            <person name="Detter J.C."/>
            <person name="Glavina del Rio T."/>
            <person name="Hammon N."/>
            <person name="Israni S."/>
            <person name="Dalin E."/>
            <person name="Tice H."/>
            <person name="Pitluck S."/>
            <person name="Kiss H."/>
            <person name="Brettin T."/>
            <person name="Bruce D."/>
            <person name="Han C."/>
            <person name="Tapia R."/>
            <person name="Gilna P."/>
            <person name="Schmutz J."/>
            <person name="Larimer F."/>
            <person name="Land M."/>
            <person name="Hauser L."/>
            <person name="Kyrpides N."/>
            <person name="Mikhailova N."/>
            <person name="Miller C.D."/>
            <person name="Richardson P."/>
        </authorList>
    </citation>
    <scope>NUCLEOTIDE SEQUENCE [LARGE SCALE GENOMIC DNA]</scope>
    <source>
        <strain>KMS</strain>
    </source>
</reference>
<protein>
    <recommendedName>
        <fullName evidence="1">Imidazole glycerol phosphate synthase subunit HisF</fullName>
        <ecNumber evidence="1">4.3.2.10</ecNumber>
    </recommendedName>
    <alternativeName>
        <fullName evidence="1">IGP synthase cyclase subunit</fullName>
    </alternativeName>
    <alternativeName>
        <fullName evidence="1">IGP synthase subunit HisF</fullName>
    </alternativeName>
    <alternativeName>
        <fullName evidence="1">ImGP synthase subunit HisF</fullName>
        <shortName evidence="1">IGPS subunit HisF</shortName>
    </alternativeName>
</protein>
<name>HIS6_MYCSK</name>
<gene>
    <name evidence="1" type="primary">hisF</name>
    <name type="ordered locus">Mkms_3116</name>
</gene>
<sequence>MAADRGLAVRVIPCLDVDAGRVVKGVNFENLRDAGDPVELAAVYDAEGADELTFLDVTASSSGRSTMLDVVRRTAEQVFIPLTVGGGVRAVADVDALLRAGADKVSVNTAAIARPELLAELARQFGSQCIVLSVDARTVPQGEQPTPSGWEVTTHGGRRGTGIDAVEWATRGAELGVGEILLNSMDFDGTKAGFDLPMLRAVRGAVTVPVIASGGAGAVEHFAPAVHAGADAVLAASVFHFKELTIGQVKAAMAAEGITVR</sequence>
<comment type="function">
    <text evidence="1">IGPS catalyzes the conversion of PRFAR and glutamine to IGP, AICAR and glutamate. The HisF subunit catalyzes the cyclization activity that produces IGP and AICAR from PRFAR using the ammonia provided by the HisH subunit.</text>
</comment>
<comment type="catalytic activity">
    <reaction evidence="1">
        <text>5-[(5-phospho-1-deoxy-D-ribulos-1-ylimino)methylamino]-1-(5-phospho-beta-D-ribosyl)imidazole-4-carboxamide + L-glutamine = D-erythro-1-(imidazol-4-yl)glycerol 3-phosphate + 5-amino-1-(5-phospho-beta-D-ribosyl)imidazole-4-carboxamide + L-glutamate + H(+)</text>
        <dbReference type="Rhea" id="RHEA:24793"/>
        <dbReference type="ChEBI" id="CHEBI:15378"/>
        <dbReference type="ChEBI" id="CHEBI:29985"/>
        <dbReference type="ChEBI" id="CHEBI:58278"/>
        <dbReference type="ChEBI" id="CHEBI:58359"/>
        <dbReference type="ChEBI" id="CHEBI:58475"/>
        <dbReference type="ChEBI" id="CHEBI:58525"/>
        <dbReference type="EC" id="4.3.2.10"/>
    </reaction>
</comment>
<comment type="pathway">
    <text evidence="1">Amino-acid biosynthesis; L-histidine biosynthesis; L-histidine from 5-phospho-alpha-D-ribose 1-diphosphate: step 5/9.</text>
</comment>
<comment type="subunit">
    <text evidence="1">Heterodimer of HisH and HisF.</text>
</comment>
<comment type="subcellular location">
    <subcellularLocation>
        <location evidence="1">Cytoplasm</location>
    </subcellularLocation>
</comment>
<comment type="similarity">
    <text evidence="1">Belongs to the HisA/HisF family.</text>
</comment>
<organism>
    <name type="scientific">Mycobacterium sp. (strain KMS)</name>
    <dbReference type="NCBI Taxonomy" id="189918"/>
    <lineage>
        <taxon>Bacteria</taxon>
        <taxon>Bacillati</taxon>
        <taxon>Actinomycetota</taxon>
        <taxon>Actinomycetes</taxon>
        <taxon>Mycobacteriales</taxon>
        <taxon>Mycobacteriaceae</taxon>
        <taxon>Mycobacterium</taxon>
    </lineage>
</organism>
<keyword id="KW-0028">Amino-acid biosynthesis</keyword>
<keyword id="KW-0963">Cytoplasm</keyword>
<keyword id="KW-0368">Histidine biosynthesis</keyword>
<keyword id="KW-0456">Lyase</keyword>
<proteinExistence type="inferred from homology"/>
<evidence type="ECO:0000255" key="1">
    <source>
        <dbReference type="HAMAP-Rule" id="MF_01013"/>
    </source>
</evidence>
<feature type="chain" id="PRO_1000063096" description="Imidazole glycerol phosphate synthase subunit HisF">
    <location>
        <begin position="1"/>
        <end position="261"/>
    </location>
</feature>
<feature type="active site" evidence="1">
    <location>
        <position position="16"/>
    </location>
</feature>
<feature type="active site" evidence="1">
    <location>
        <position position="135"/>
    </location>
</feature>